<accession>P22974</accession>
<feature type="chain" id="PRO_0000196010" description="Sperm-specific protein PHI-2B">
    <location>
        <begin position="1"/>
        <end position="148"/>
    </location>
</feature>
<feature type="domain" description="H15" evidence="2">
    <location>
        <begin position="40"/>
        <end position="119"/>
    </location>
</feature>
<feature type="region of interest" description="Disordered" evidence="3">
    <location>
        <begin position="1"/>
        <end position="44"/>
    </location>
</feature>
<feature type="region of interest" description="Disordered" evidence="3">
    <location>
        <begin position="97"/>
        <end position="148"/>
    </location>
</feature>
<feature type="compositionally biased region" description="Basic residues" evidence="3">
    <location>
        <begin position="1"/>
        <end position="35"/>
    </location>
</feature>
<feature type="compositionally biased region" description="Basic residues" evidence="3">
    <location>
        <begin position="124"/>
        <end position="148"/>
    </location>
</feature>
<organism>
    <name type="scientific">Mytilus californianus</name>
    <name type="common">California mussel</name>
    <dbReference type="NCBI Taxonomy" id="6549"/>
    <lineage>
        <taxon>Eukaryota</taxon>
        <taxon>Metazoa</taxon>
        <taxon>Spiralia</taxon>
        <taxon>Lophotrochozoa</taxon>
        <taxon>Mollusca</taxon>
        <taxon>Bivalvia</taxon>
        <taxon>Autobranchia</taxon>
        <taxon>Pteriomorphia</taxon>
        <taxon>Mytilida</taxon>
        <taxon>Mytiloidea</taxon>
        <taxon>Mytilidae</taxon>
        <taxon>Mytilinae</taxon>
        <taxon>Mytilus</taxon>
    </lineage>
</organism>
<reference key="1">
    <citation type="journal article" date="1993" name="J. Biol. Chem.">
        <title>Sequence and characterization of a sperm-specific histone H1-like protein of Mytilus californianus.</title>
        <authorList>
            <person name="Carlos S."/>
            <person name="Jutglar L."/>
            <person name="Borrell I."/>
            <person name="Hunt D.F."/>
            <person name="Ausio J."/>
        </authorList>
    </citation>
    <scope>PROTEIN SEQUENCE</scope>
    <source>
        <tissue>Sperm</tissue>
    </source>
</reference>
<reference key="2">
    <citation type="journal article" date="1991" name="J. Biol. Chem.">
        <title>Primary, secondary, and tertiary structure of the core of a histone H1-like protein from the sperm of Mytilus.</title>
        <authorList>
            <person name="Jutglar L."/>
            <person name="Borrell J.I."/>
            <person name="Ausio J."/>
        </authorList>
    </citation>
    <scope>PROTEIN SEQUENCE OF 35-118</scope>
    <source>
        <tissue>Sperm</tissue>
    </source>
</reference>
<dbReference type="PIR" id="A45316">
    <property type="entry name" value="A45316"/>
</dbReference>
<dbReference type="SMR" id="P22974"/>
<dbReference type="GO" id="GO:0000786">
    <property type="term" value="C:nucleosome"/>
    <property type="evidence" value="ECO:0007669"/>
    <property type="project" value="UniProtKB-KW"/>
</dbReference>
<dbReference type="GO" id="GO:0005634">
    <property type="term" value="C:nucleus"/>
    <property type="evidence" value="ECO:0007669"/>
    <property type="project" value="UniProtKB-SubCell"/>
</dbReference>
<dbReference type="GO" id="GO:0003677">
    <property type="term" value="F:DNA binding"/>
    <property type="evidence" value="ECO:0007669"/>
    <property type="project" value="UniProtKB-KW"/>
</dbReference>
<dbReference type="GO" id="GO:0030527">
    <property type="term" value="F:structural constituent of chromatin"/>
    <property type="evidence" value="ECO:0007669"/>
    <property type="project" value="InterPro"/>
</dbReference>
<dbReference type="GO" id="GO:0030154">
    <property type="term" value="P:cell differentiation"/>
    <property type="evidence" value="ECO:0007669"/>
    <property type="project" value="UniProtKB-KW"/>
</dbReference>
<dbReference type="GO" id="GO:0030261">
    <property type="term" value="P:chromosome condensation"/>
    <property type="evidence" value="ECO:0007669"/>
    <property type="project" value="UniProtKB-KW"/>
</dbReference>
<dbReference type="GO" id="GO:0006334">
    <property type="term" value="P:nucleosome assembly"/>
    <property type="evidence" value="ECO:0007669"/>
    <property type="project" value="InterPro"/>
</dbReference>
<dbReference type="GO" id="GO:0007283">
    <property type="term" value="P:spermatogenesis"/>
    <property type="evidence" value="ECO:0007669"/>
    <property type="project" value="UniProtKB-KW"/>
</dbReference>
<dbReference type="CDD" id="cd00073">
    <property type="entry name" value="H15"/>
    <property type="match status" value="1"/>
</dbReference>
<dbReference type="Gene3D" id="1.10.10.10">
    <property type="entry name" value="Winged helix-like DNA-binding domain superfamily/Winged helix DNA-binding domain"/>
    <property type="match status" value="1"/>
</dbReference>
<dbReference type="InterPro" id="IPR005819">
    <property type="entry name" value="H1/H5"/>
</dbReference>
<dbReference type="InterPro" id="IPR005818">
    <property type="entry name" value="Histone_H1/H5_H15"/>
</dbReference>
<dbReference type="InterPro" id="IPR036388">
    <property type="entry name" value="WH-like_DNA-bd_sf"/>
</dbReference>
<dbReference type="InterPro" id="IPR036390">
    <property type="entry name" value="WH_DNA-bd_sf"/>
</dbReference>
<dbReference type="Pfam" id="PF00538">
    <property type="entry name" value="Linker_histone"/>
    <property type="match status" value="1"/>
</dbReference>
<dbReference type="PRINTS" id="PR00624">
    <property type="entry name" value="HISTONEH5"/>
</dbReference>
<dbReference type="SMART" id="SM00526">
    <property type="entry name" value="H15"/>
    <property type="match status" value="1"/>
</dbReference>
<dbReference type="SUPFAM" id="SSF46785">
    <property type="entry name" value="Winged helix' DNA-binding domain"/>
    <property type="match status" value="1"/>
</dbReference>
<dbReference type="PROSITE" id="PS51504">
    <property type="entry name" value="H15"/>
    <property type="match status" value="1"/>
</dbReference>
<keyword id="KW-0158">Chromosome</keyword>
<keyword id="KW-0217">Developmental protein</keyword>
<keyword id="KW-0221">Differentiation</keyword>
<keyword id="KW-0903">Direct protein sequencing</keyword>
<keyword id="KW-0226">DNA condensation</keyword>
<keyword id="KW-0238">DNA-binding</keyword>
<keyword id="KW-0544">Nucleosome core</keyword>
<keyword id="KW-0539">Nucleus</keyword>
<keyword id="KW-0744">Spermatogenesis</keyword>
<comment type="function">
    <text evidence="1">Linker histones are implicated in chromatin remodeling and/or transcriptional regulation during spermiogenesis, the process of spermatid maturation into spermatozoa.</text>
</comment>
<comment type="subcellular location">
    <subcellularLocation>
        <location>Nucleus</location>
    </subcellularLocation>
    <subcellularLocation>
        <location>Chromosome</location>
    </subcellularLocation>
</comment>
<comment type="tissue specificity">
    <text>Sperm.</text>
</comment>
<comment type="similarity">
    <text evidence="2">Belongs to the histone H1/H5 family.</text>
</comment>
<name>H1L_MYTCA</name>
<evidence type="ECO:0000250" key="1"/>
<evidence type="ECO:0000255" key="2">
    <source>
        <dbReference type="PROSITE-ProRule" id="PRU00837"/>
    </source>
</evidence>
<evidence type="ECO:0000256" key="3">
    <source>
        <dbReference type="SAM" id="MobiDB-lite"/>
    </source>
</evidence>
<protein>
    <recommendedName>
        <fullName>Sperm-specific protein PHI-2B</fullName>
    </recommendedName>
    <alternativeName>
        <fullName>PL-II*</fullName>
    </alternativeName>
    <alternativeName>
        <fullName>Sperm-specific linker histone H1-like protein</fullName>
    </alternativeName>
</protein>
<sequence length="148" mass="15688">PSPSRRSRSRSRSRSKSPKRSPAKKARKTPKKRRATGGAKKPSTLSMIVAAIQAMKNRKGSSVQAIRKYILANNKGINTSRLGSAMKLAFAKGLKSGVLVRPKTSAGASGATGSFRVGKAPSSPKKKAKKAKSPKKKSSKKSSNKSNN</sequence>
<proteinExistence type="evidence at protein level"/>